<evidence type="ECO:0000255" key="1"/>
<evidence type="ECO:0000255" key="2">
    <source>
        <dbReference type="PROSITE-ProRule" id="PRU00498"/>
    </source>
</evidence>
<evidence type="ECO:0000269" key="3">
    <source>
    </source>
</evidence>
<evidence type="ECO:0000303" key="4">
    <source>
    </source>
</evidence>
<evidence type="ECO:0000305" key="5"/>
<evidence type="ECO:0000305" key="6">
    <source>
    </source>
</evidence>
<evidence type="ECO:0000312" key="7">
    <source>
        <dbReference type="EMBL" id="APD16194.1"/>
    </source>
</evidence>
<evidence type="ECO:0000312" key="8">
    <source>
        <dbReference type="Proteomes" id="UP000001292"/>
    </source>
</evidence>
<dbReference type="EMBL" id="KX694389">
    <property type="protein sequence ID" value="APD16194.1"/>
    <property type="molecule type" value="mRNA"/>
</dbReference>
<dbReference type="EMBL" id="CH480815">
    <property type="protein sequence ID" value="EDW41927.1"/>
    <property type="status" value="ALT_SEQ"/>
    <property type="molecule type" value="Genomic_DNA"/>
</dbReference>
<dbReference type="RefSeq" id="XP_002030941.1">
    <property type="nucleotide sequence ID" value="XM_002030905.1"/>
</dbReference>
<dbReference type="STRING" id="7238.A0A1J0M738"/>
<dbReference type="GlyCosmos" id="A0A1J0M738">
    <property type="glycosylation" value="6 sites, No reported glycans"/>
</dbReference>
<dbReference type="EnsemblMetazoa" id="XM_032719081.1">
    <property type="protein sequence ID" value="XP_032574972.1"/>
    <property type="gene ID" value="LOC6606133"/>
</dbReference>
<dbReference type="HOGENOM" id="CLU_015993_3_0_1"/>
<dbReference type="Proteomes" id="UP000001292">
    <property type="component" value="Unassembled WGS sequence"/>
</dbReference>
<dbReference type="GO" id="GO:0044297">
    <property type="term" value="C:cell body"/>
    <property type="evidence" value="ECO:0000314"/>
    <property type="project" value="UniProtKB"/>
</dbReference>
<dbReference type="GO" id="GO:0030425">
    <property type="term" value="C:dendrite"/>
    <property type="evidence" value="ECO:0000314"/>
    <property type="project" value="UniProtKB"/>
</dbReference>
<dbReference type="GO" id="GO:0005886">
    <property type="term" value="C:plasma membrane"/>
    <property type="evidence" value="ECO:0007669"/>
    <property type="project" value="UniProtKB-SubCell"/>
</dbReference>
<dbReference type="GO" id="GO:0071683">
    <property type="term" value="C:sensory dendrite"/>
    <property type="evidence" value="ECO:0007669"/>
    <property type="project" value="EnsemblMetazoa"/>
</dbReference>
<dbReference type="GO" id="GO:0005230">
    <property type="term" value="F:extracellular ligand-gated monoatomic ion channel activity"/>
    <property type="evidence" value="ECO:0007669"/>
    <property type="project" value="EnsemblMetazoa"/>
</dbReference>
<dbReference type="GO" id="GO:0004984">
    <property type="term" value="F:olfactory receptor activity"/>
    <property type="evidence" value="ECO:0000315"/>
    <property type="project" value="UniProtKB"/>
</dbReference>
<dbReference type="GO" id="GO:0050911">
    <property type="term" value="P:detection of chemical stimulus involved in sensory perception of smell"/>
    <property type="evidence" value="ECO:0000315"/>
    <property type="project" value="UniProtKB"/>
</dbReference>
<dbReference type="GO" id="GO:0007605">
    <property type="term" value="P:sensory perception of sound"/>
    <property type="evidence" value="ECO:0007669"/>
    <property type="project" value="EnsemblMetazoa"/>
</dbReference>
<dbReference type="FunFam" id="1.10.287.70:FF:000180">
    <property type="entry name" value="Ionotropic receptor 75a"/>
    <property type="match status" value="1"/>
</dbReference>
<dbReference type="Gene3D" id="1.10.287.70">
    <property type="match status" value="1"/>
</dbReference>
<dbReference type="InterPro" id="IPR052192">
    <property type="entry name" value="Insect_Ionotropic_Sensory_Rcpt"/>
</dbReference>
<dbReference type="InterPro" id="IPR001320">
    <property type="entry name" value="Iontro_rcpt_C"/>
</dbReference>
<dbReference type="PANTHER" id="PTHR42643">
    <property type="entry name" value="IONOTROPIC RECEPTOR 20A-RELATED"/>
    <property type="match status" value="1"/>
</dbReference>
<dbReference type="PANTHER" id="PTHR42643:SF32">
    <property type="entry name" value="IONOTROPIC RECEPTOR 31A, ISOFORM C-RELATED"/>
    <property type="match status" value="1"/>
</dbReference>
<dbReference type="Pfam" id="PF24576">
    <property type="entry name" value="IR75A_N"/>
    <property type="match status" value="1"/>
</dbReference>
<dbReference type="Pfam" id="PF00060">
    <property type="entry name" value="Lig_chan"/>
    <property type="match status" value="1"/>
</dbReference>
<dbReference type="SUPFAM" id="SSF53850">
    <property type="entry name" value="Periplasmic binding protein-like II"/>
    <property type="match status" value="1"/>
</dbReference>
<proteinExistence type="evidence at protein level"/>
<reference evidence="7" key="1">
    <citation type="journal article" date="2016" name="Nature">
        <title>Olfactory receptor pseudo-pseudogenes.</title>
        <authorList>
            <person name="Prieto-Godino L.L."/>
            <person name="Rytz R."/>
            <person name="Bargeton B."/>
            <person name="Abuin L."/>
            <person name="Arguello J.R."/>
            <person name="Peraro M.D."/>
            <person name="Benton R."/>
        </authorList>
    </citation>
    <scope>NUCLEOTIDE SEQUENCE [MRNA]</scope>
    <scope>FUNCTION</scope>
    <scope>TISSUE SPECIFICITY</scope>
</reference>
<reference evidence="8" key="2">
    <citation type="journal article" date="2007" name="Nature">
        <title>Evolution of genes and genomes on the Drosophila phylogeny.</title>
        <authorList>
            <consortium name="Drosophila 12 genomes consortium"/>
        </authorList>
    </citation>
    <scope>NUCLEOTIDE SEQUENCE [LARGE SCALE GENOMIC DNA]</scope>
    <source>
        <strain evidence="8">Rob3c / Tucson 14021-0248.25</strain>
    </source>
</reference>
<organism evidence="7">
    <name type="scientific">Drosophila sechellia</name>
    <name type="common">Fruit fly</name>
    <dbReference type="NCBI Taxonomy" id="7238"/>
    <lineage>
        <taxon>Eukaryota</taxon>
        <taxon>Metazoa</taxon>
        <taxon>Ecdysozoa</taxon>
        <taxon>Arthropoda</taxon>
        <taxon>Hexapoda</taxon>
        <taxon>Insecta</taxon>
        <taxon>Pterygota</taxon>
        <taxon>Neoptera</taxon>
        <taxon>Endopterygota</taxon>
        <taxon>Diptera</taxon>
        <taxon>Brachycera</taxon>
        <taxon>Muscomorpha</taxon>
        <taxon>Ephydroidea</taxon>
        <taxon>Drosophilidae</taxon>
        <taxon>Drosophila</taxon>
        <taxon>Sophophora</taxon>
    </lineage>
</organism>
<feature type="chain" id="PRO_0000444756" description="Ionotropic receptor 75a" evidence="5">
    <location>
        <begin position="1"/>
        <end position="629"/>
    </location>
</feature>
<feature type="topological domain" description="Extracellular" evidence="5">
    <location>
        <begin position="1"/>
        <end position="335"/>
    </location>
</feature>
<feature type="transmembrane region" description="Helical" evidence="1">
    <location>
        <begin position="336"/>
        <end position="356"/>
    </location>
</feature>
<feature type="topological domain" description="Cytoplasmic" evidence="5">
    <location>
        <begin position="357"/>
        <end position="374"/>
    </location>
</feature>
<feature type="transmembrane region" description="Helical" evidence="1">
    <location>
        <begin position="375"/>
        <end position="395"/>
    </location>
</feature>
<feature type="topological domain" description="Extracellular" evidence="5">
    <location>
        <begin position="396"/>
        <end position="402"/>
    </location>
</feature>
<feature type="transmembrane region" description="Helical" evidence="1">
    <location>
        <begin position="403"/>
        <end position="423"/>
    </location>
</feature>
<feature type="topological domain" description="Cytoplasmic" evidence="5">
    <location>
        <begin position="424"/>
        <end position="592"/>
    </location>
</feature>
<feature type="transmembrane region" description="Helical" evidence="1">
    <location>
        <begin position="593"/>
        <end position="613"/>
    </location>
</feature>
<feature type="topological domain" description="Extracellular" evidence="5">
    <location>
        <begin position="614"/>
        <end position="629"/>
    </location>
</feature>
<feature type="glycosylation site" description="N-linked (GlcNAc...) asparagine" evidence="2">
    <location>
        <position position="61"/>
    </location>
</feature>
<feature type="glycosylation site" description="N-linked (GlcNAc...) asparagine" evidence="2">
    <location>
        <position position="112"/>
    </location>
</feature>
<feature type="glycosylation site" description="N-linked (GlcNAc...) asparagine" evidence="2">
    <location>
        <position position="126"/>
    </location>
</feature>
<feature type="glycosylation site" description="N-linked (GlcNAc...) asparagine" evidence="2">
    <location>
        <position position="144"/>
    </location>
</feature>
<feature type="glycosylation site" description="N-linked (GlcNAc...) asparagine" evidence="2">
    <location>
        <position position="166"/>
    </location>
</feature>
<feature type="glycosylation site" description="N-linked (GlcNAc...) asparagine" evidence="2">
    <location>
        <position position="232"/>
    </location>
</feature>
<name>IR75A_DROSE</name>
<sequence length="629" mass="72622">MQLVQLANFVLDNLVQSRIGFIVLFHCWQSDESLKFAEQFMKPIHPILVYHQFVQMRGVLNWSHLELNYMGHTQPTLAIYVDIKCDQAQDLLEEASREQIYNQHYHWLLVGNQSELEFNDLFALFNISIDADVSYVKEQIQDNNDSVAYAVYDVYNNGKIIGGQLNVTGSHEMSCDPFKCRRTRYLSSLQKRSKYGNREQLTDVVLRVATVVTXRPLTLSDDELIRFLSQENDTHIDSLARFGFHLTLILRDLLYCKMKFIFSDSWSKSDVVGGSVGAVVDQTADLTASPSLATEGRLKYLSAIIETGFFRSVCIFRTPHNAGLRGDVFLQPFSPLVWYLFGGVLSLIGVLLWITFYMECKRMQKRWRLDYLPSLLSTFLISFGAACIQSSSLIPRSAGGRLIYFALFLISFIMYNYYTSVVVSSLLSSPVKSKIKTMQQLAESSLTVGLEPLPFTKSYLNYSRLPEIHLFIKRKIESQTQNPELWLPAEQGVLRVKANPGYVYVFETSSGYAYVERYFTAQEICDLNEVLFRPEKLLYTHLHRNSTYKELFRLRFLRILETGVYRKQRSYWVHMKLHCEAQNFVITVGMEYVAPLLLMLICADILVVVILLVELAWKRFFTRPLTIHP</sequence>
<protein>
    <recommendedName>
        <fullName evidence="4">Ionotropic receptor 75a</fullName>
    </recommendedName>
</protein>
<accession>A0A1J0M738</accession>
<accession>B4HKX2</accession>
<comment type="function">
    <text evidence="3">Olfactory receptor for propionic, butyric and 2-oxopentanoic acids.</text>
</comment>
<comment type="subcellular location">
    <subcellularLocation>
        <location evidence="6">Cell membrane</location>
        <topology evidence="1">Multi-pass membrane protein</topology>
    </subcellularLocation>
    <subcellularLocation>
        <location evidence="3">Cell projection</location>
        <location evidence="3">Dendrite</location>
    </subcellularLocation>
</comment>
<comment type="tissue specificity">
    <text evidence="3">Expressed in neurons in the antennal coeloconic 2 (ac2) sensillum class of sensory hairs (at protein level).</text>
</comment>
<comment type="miscellaneous">
    <text evidence="6">This protein is translated by readthrough of a stop codon only in neurons. Readthrough of the terminator codon TAA occurs between the codons for Thr-213 and Arg-215. There is currently no protein sequence that provides the identity of residue 214.</text>
</comment>
<comment type="similarity">
    <text evidence="5">Belongs to the glutamate-gated ion channel (TC 1.A.10.1) family.</text>
</comment>
<comment type="sequence caution" evidence="5">
    <conflict type="erroneous gene model prediction">
        <sequence resource="EMBL-CDS" id="EDW41927"/>
    </conflict>
</comment>
<keyword id="KW-1003">Cell membrane</keyword>
<keyword id="KW-0966">Cell projection</keyword>
<keyword id="KW-0325">Glycoprotein</keyword>
<keyword id="KW-0472">Membrane</keyword>
<keyword id="KW-0552">Olfaction</keyword>
<keyword id="KW-0675">Receptor</keyword>
<keyword id="KW-1185">Reference proteome</keyword>
<keyword id="KW-0716">Sensory transduction</keyword>
<keyword id="KW-0812">Transmembrane</keyword>
<keyword id="KW-1133">Transmembrane helix</keyword>
<gene>
    <name evidence="4" type="primary">IR75a</name>
    <name type="ORF">GM24303</name>
</gene>